<reference key="1">
    <citation type="journal article" date="2005" name="Genome Res.">
        <title>Coping with cold: the genome of the versatile marine Antarctica bacterium Pseudoalteromonas haloplanktis TAC125.</title>
        <authorList>
            <person name="Medigue C."/>
            <person name="Krin E."/>
            <person name="Pascal G."/>
            <person name="Barbe V."/>
            <person name="Bernsel A."/>
            <person name="Bertin P.N."/>
            <person name="Cheung F."/>
            <person name="Cruveiller S."/>
            <person name="D'Amico S."/>
            <person name="Duilio A."/>
            <person name="Fang G."/>
            <person name="Feller G."/>
            <person name="Ho C."/>
            <person name="Mangenot S."/>
            <person name="Marino G."/>
            <person name="Nilsson J."/>
            <person name="Parrilli E."/>
            <person name="Rocha E.P.C."/>
            <person name="Rouy Z."/>
            <person name="Sekowska A."/>
            <person name="Tutino M.L."/>
            <person name="Vallenet D."/>
            <person name="von Heijne G."/>
            <person name="Danchin A."/>
        </authorList>
    </citation>
    <scope>NUCLEOTIDE SEQUENCE [LARGE SCALE GENOMIC DNA]</scope>
    <source>
        <strain>TAC 125</strain>
    </source>
</reference>
<dbReference type="EC" id="3.1.26.4" evidence="1"/>
<dbReference type="EMBL" id="CR954246">
    <property type="protein sequence ID" value="CAI87021.1"/>
    <property type="molecule type" value="Genomic_DNA"/>
</dbReference>
<dbReference type="SMR" id="Q3IIS1"/>
<dbReference type="STRING" id="326442.PSHAa1964"/>
<dbReference type="KEGG" id="pha:PSHAa1964"/>
<dbReference type="eggNOG" id="COG0328">
    <property type="taxonomic scope" value="Bacteria"/>
</dbReference>
<dbReference type="HOGENOM" id="CLU_030894_6_0_6"/>
<dbReference type="BioCyc" id="PHAL326442:PSHA_RS09720-MONOMER"/>
<dbReference type="Proteomes" id="UP000006843">
    <property type="component" value="Chromosome I"/>
</dbReference>
<dbReference type="GO" id="GO:0005737">
    <property type="term" value="C:cytoplasm"/>
    <property type="evidence" value="ECO:0007669"/>
    <property type="project" value="UniProtKB-SubCell"/>
</dbReference>
<dbReference type="GO" id="GO:0000287">
    <property type="term" value="F:magnesium ion binding"/>
    <property type="evidence" value="ECO:0007669"/>
    <property type="project" value="UniProtKB-UniRule"/>
</dbReference>
<dbReference type="GO" id="GO:0003676">
    <property type="term" value="F:nucleic acid binding"/>
    <property type="evidence" value="ECO:0007669"/>
    <property type="project" value="InterPro"/>
</dbReference>
<dbReference type="GO" id="GO:0004523">
    <property type="term" value="F:RNA-DNA hybrid ribonuclease activity"/>
    <property type="evidence" value="ECO:0007669"/>
    <property type="project" value="UniProtKB-UniRule"/>
</dbReference>
<dbReference type="GO" id="GO:0043137">
    <property type="term" value="P:DNA replication, removal of RNA primer"/>
    <property type="evidence" value="ECO:0007669"/>
    <property type="project" value="TreeGrafter"/>
</dbReference>
<dbReference type="CDD" id="cd09278">
    <property type="entry name" value="RNase_HI_prokaryote_like"/>
    <property type="match status" value="1"/>
</dbReference>
<dbReference type="FunFam" id="3.30.420.10:FF:000008">
    <property type="entry name" value="Ribonuclease H"/>
    <property type="match status" value="1"/>
</dbReference>
<dbReference type="Gene3D" id="3.30.420.10">
    <property type="entry name" value="Ribonuclease H-like superfamily/Ribonuclease H"/>
    <property type="match status" value="1"/>
</dbReference>
<dbReference type="HAMAP" id="MF_00042">
    <property type="entry name" value="RNase_H"/>
    <property type="match status" value="1"/>
</dbReference>
<dbReference type="InterPro" id="IPR050092">
    <property type="entry name" value="RNase_H"/>
</dbReference>
<dbReference type="InterPro" id="IPR012337">
    <property type="entry name" value="RNaseH-like_sf"/>
</dbReference>
<dbReference type="InterPro" id="IPR002156">
    <property type="entry name" value="RNaseH_domain"/>
</dbReference>
<dbReference type="InterPro" id="IPR036397">
    <property type="entry name" value="RNaseH_sf"/>
</dbReference>
<dbReference type="InterPro" id="IPR022892">
    <property type="entry name" value="RNaseHI"/>
</dbReference>
<dbReference type="NCBIfam" id="NF001236">
    <property type="entry name" value="PRK00203.1"/>
    <property type="match status" value="1"/>
</dbReference>
<dbReference type="PANTHER" id="PTHR10642">
    <property type="entry name" value="RIBONUCLEASE H1"/>
    <property type="match status" value="1"/>
</dbReference>
<dbReference type="PANTHER" id="PTHR10642:SF26">
    <property type="entry name" value="RIBONUCLEASE H1"/>
    <property type="match status" value="1"/>
</dbReference>
<dbReference type="Pfam" id="PF00075">
    <property type="entry name" value="RNase_H"/>
    <property type="match status" value="1"/>
</dbReference>
<dbReference type="SUPFAM" id="SSF53098">
    <property type="entry name" value="Ribonuclease H-like"/>
    <property type="match status" value="1"/>
</dbReference>
<dbReference type="PROSITE" id="PS50879">
    <property type="entry name" value="RNASE_H_1"/>
    <property type="match status" value="1"/>
</dbReference>
<protein>
    <recommendedName>
        <fullName evidence="1">Ribonuclease H</fullName>
        <shortName evidence="1">RNase H</shortName>
        <ecNumber evidence="1">3.1.26.4</ecNumber>
    </recommendedName>
</protein>
<name>RNH_PSET1</name>
<keyword id="KW-0963">Cytoplasm</keyword>
<keyword id="KW-0255">Endonuclease</keyword>
<keyword id="KW-0378">Hydrolase</keyword>
<keyword id="KW-0460">Magnesium</keyword>
<keyword id="KW-0479">Metal-binding</keyword>
<keyword id="KW-0540">Nuclease</keyword>
<keyword id="KW-1185">Reference proteome</keyword>
<feature type="chain" id="PRO_0000332654" description="Ribonuclease H">
    <location>
        <begin position="1"/>
        <end position="154"/>
    </location>
</feature>
<feature type="domain" description="RNase H type-1" evidence="2">
    <location>
        <begin position="1"/>
        <end position="142"/>
    </location>
</feature>
<feature type="binding site" evidence="1">
    <location>
        <position position="10"/>
    </location>
    <ligand>
        <name>Mg(2+)</name>
        <dbReference type="ChEBI" id="CHEBI:18420"/>
        <label>1</label>
    </ligand>
</feature>
<feature type="binding site" evidence="1">
    <location>
        <position position="10"/>
    </location>
    <ligand>
        <name>Mg(2+)</name>
        <dbReference type="ChEBI" id="CHEBI:18420"/>
        <label>2</label>
    </ligand>
</feature>
<feature type="binding site" evidence="1">
    <location>
        <position position="48"/>
    </location>
    <ligand>
        <name>Mg(2+)</name>
        <dbReference type="ChEBI" id="CHEBI:18420"/>
        <label>1</label>
    </ligand>
</feature>
<feature type="binding site" evidence="1">
    <location>
        <position position="70"/>
    </location>
    <ligand>
        <name>Mg(2+)</name>
        <dbReference type="ChEBI" id="CHEBI:18420"/>
        <label>1</label>
    </ligand>
</feature>
<feature type="binding site" evidence="1">
    <location>
        <position position="134"/>
    </location>
    <ligand>
        <name>Mg(2+)</name>
        <dbReference type="ChEBI" id="CHEBI:18420"/>
        <label>2</label>
    </ligand>
</feature>
<accession>Q3IIS1</accession>
<sequence>MEKTVEIYTDGSCLGNPGPGGYGIFMIYNEHEKKLSQGYKLTTNNRMEMLGAIVALEVLTRPCVINITTDSQYVKQGIESWITNWKKRGWLTSAKKPVKNVDLWKRLDLACAKHTVTWKWVKGHSGHKYNEIVDDLARDAAGSKDLLDDVGYQP</sequence>
<gene>
    <name evidence="1" type="primary">rnhA</name>
    <name type="ordered locus">PSHAa1964</name>
</gene>
<evidence type="ECO:0000255" key="1">
    <source>
        <dbReference type="HAMAP-Rule" id="MF_00042"/>
    </source>
</evidence>
<evidence type="ECO:0000255" key="2">
    <source>
        <dbReference type="PROSITE-ProRule" id="PRU00408"/>
    </source>
</evidence>
<comment type="function">
    <text evidence="1">Endonuclease that specifically degrades the RNA of RNA-DNA hybrids.</text>
</comment>
<comment type="catalytic activity">
    <reaction evidence="1">
        <text>Endonucleolytic cleavage to 5'-phosphomonoester.</text>
        <dbReference type="EC" id="3.1.26.4"/>
    </reaction>
</comment>
<comment type="cofactor">
    <cofactor evidence="1">
        <name>Mg(2+)</name>
        <dbReference type="ChEBI" id="CHEBI:18420"/>
    </cofactor>
    <text evidence="1">Binds 1 Mg(2+) ion per subunit. May bind a second metal ion at a regulatory site, or after substrate binding.</text>
</comment>
<comment type="subunit">
    <text evidence="1">Monomer.</text>
</comment>
<comment type="subcellular location">
    <subcellularLocation>
        <location evidence="1">Cytoplasm</location>
    </subcellularLocation>
</comment>
<comment type="similarity">
    <text evidence="1">Belongs to the RNase H family.</text>
</comment>
<organism>
    <name type="scientific">Pseudoalteromonas translucida (strain TAC 125)</name>
    <dbReference type="NCBI Taxonomy" id="326442"/>
    <lineage>
        <taxon>Bacteria</taxon>
        <taxon>Pseudomonadati</taxon>
        <taxon>Pseudomonadota</taxon>
        <taxon>Gammaproteobacteria</taxon>
        <taxon>Alteromonadales</taxon>
        <taxon>Pseudoalteromonadaceae</taxon>
        <taxon>Pseudoalteromonas</taxon>
    </lineage>
</organism>
<proteinExistence type="inferred from homology"/>